<feature type="chain" id="PRO_1000123140" description="dCTP deaminase">
    <location>
        <begin position="1"/>
        <end position="186"/>
    </location>
</feature>
<feature type="active site" description="Proton donor/acceptor" evidence="1">
    <location>
        <position position="133"/>
    </location>
</feature>
<feature type="binding site" evidence="1">
    <location>
        <begin position="107"/>
        <end position="112"/>
    </location>
    <ligand>
        <name>dCTP</name>
        <dbReference type="ChEBI" id="CHEBI:61481"/>
    </ligand>
</feature>
<feature type="binding site" evidence="1">
    <location>
        <position position="152"/>
    </location>
    <ligand>
        <name>dCTP</name>
        <dbReference type="ChEBI" id="CHEBI:61481"/>
    </ligand>
</feature>
<feature type="binding site" evidence="1">
    <location>
        <position position="166"/>
    </location>
    <ligand>
        <name>dCTP</name>
        <dbReference type="ChEBI" id="CHEBI:61481"/>
    </ligand>
</feature>
<feature type="binding site" evidence="1">
    <location>
        <position position="176"/>
    </location>
    <ligand>
        <name>dCTP</name>
        <dbReference type="ChEBI" id="CHEBI:61481"/>
    </ligand>
</feature>
<dbReference type="EC" id="3.5.4.13" evidence="1"/>
<dbReference type="EMBL" id="CP001337">
    <property type="protein sequence ID" value="ACL25319.1"/>
    <property type="molecule type" value="Genomic_DNA"/>
</dbReference>
<dbReference type="RefSeq" id="WP_015941177.1">
    <property type="nucleotide sequence ID" value="NC_011831.1"/>
</dbReference>
<dbReference type="SMR" id="B8G3E6"/>
<dbReference type="STRING" id="326427.Cagg_2446"/>
<dbReference type="KEGG" id="cag:Cagg_2446"/>
<dbReference type="eggNOG" id="COG0717">
    <property type="taxonomic scope" value="Bacteria"/>
</dbReference>
<dbReference type="HOGENOM" id="CLU_087476_4_0_0"/>
<dbReference type="OrthoDB" id="9780202at2"/>
<dbReference type="UniPathway" id="UPA00610">
    <property type="reaction ID" value="UER00665"/>
</dbReference>
<dbReference type="Proteomes" id="UP000002508">
    <property type="component" value="Chromosome"/>
</dbReference>
<dbReference type="GO" id="GO:0008829">
    <property type="term" value="F:dCTP deaminase activity"/>
    <property type="evidence" value="ECO:0007669"/>
    <property type="project" value="UniProtKB-UniRule"/>
</dbReference>
<dbReference type="GO" id="GO:0000166">
    <property type="term" value="F:nucleotide binding"/>
    <property type="evidence" value="ECO:0007669"/>
    <property type="project" value="UniProtKB-KW"/>
</dbReference>
<dbReference type="GO" id="GO:0006226">
    <property type="term" value="P:dUMP biosynthetic process"/>
    <property type="evidence" value="ECO:0007669"/>
    <property type="project" value="UniProtKB-UniPathway"/>
</dbReference>
<dbReference type="GO" id="GO:0006229">
    <property type="term" value="P:dUTP biosynthetic process"/>
    <property type="evidence" value="ECO:0007669"/>
    <property type="project" value="UniProtKB-UniRule"/>
</dbReference>
<dbReference type="GO" id="GO:0015949">
    <property type="term" value="P:nucleobase-containing small molecule interconversion"/>
    <property type="evidence" value="ECO:0007669"/>
    <property type="project" value="TreeGrafter"/>
</dbReference>
<dbReference type="CDD" id="cd07557">
    <property type="entry name" value="trimeric_dUTPase"/>
    <property type="match status" value="1"/>
</dbReference>
<dbReference type="FunFam" id="2.70.40.10:FF:000001">
    <property type="entry name" value="dCTP deaminase"/>
    <property type="match status" value="1"/>
</dbReference>
<dbReference type="Gene3D" id="2.70.40.10">
    <property type="match status" value="1"/>
</dbReference>
<dbReference type="HAMAP" id="MF_00146">
    <property type="entry name" value="dCTP_deaminase"/>
    <property type="match status" value="1"/>
</dbReference>
<dbReference type="InterPro" id="IPR011962">
    <property type="entry name" value="dCTP_deaminase"/>
</dbReference>
<dbReference type="InterPro" id="IPR036157">
    <property type="entry name" value="dUTPase-like_sf"/>
</dbReference>
<dbReference type="InterPro" id="IPR033704">
    <property type="entry name" value="dUTPase_trimeric"/>
</dbReference>
<dbReference type="NCBIfam" id="TIGR02274">
    <property type="entry name" value="dCTP_deam"/>
    <property type="match status" value="1"/>
</dbReference>
<dbReference type="PANTHER" id="PTHR42680">
    <property type="entry name" value="DCTP DEAMINASE"/>
    <property type="match status" value="1"/>
</dbReference>
<dbReference type="PANTHER" id="PTHR42680:SF3">
    <property type="entry name" value="DCTP DEAMINASE"/>
    <property type="match status" value="1"/>
</dbReference>
<dbReference type="Pfam" id="PF22769">
    <property type="entry name" value="DCD"/>
    <property type="match status" value="1"/>
</dbReference>
<dbReference type="SUPFAM" id="SSF51283">
    <property type="entry name" value="dUTPase-like"/>
    <property type="match status" value="1"/>
</dbReference>
<comment type="function">
    <text evidence="1">Catalyzes the deamination of dCTP to dUTP.</text>
</comment>
<comment type="catalytic activity">
    <reaction evidence="1">
        <text>dCTP + H2O + H(+) = dUTP + NH4(+)</text>
        <dbReference type="Rhea" id="RHEA:22680"/>
        <dbReference type="ChEBI" id="CHEBI:15377"/>
        <dbReference type="ChEBI" id="CHEBI:15378"/>
        <dbReference type="ChEBI" id="CHEBI:28938"/>
        <dbReference type="ChEBI" id="CHEBI:61481"/>
        <dbReference type="ChEBI" id="CHEBI:61555"/>
        <dbReference type="EC" id="3.5.4.13"/>
    </reaction>
</comment>
<comment type="pathway">
    <text evidence="1">Pyrimidine metabolism; dUMP biosynthesis; dUMP from dCTP (dUTP route): step 1/2.</text>
</comment>
<comment type="subunit">
    <text evidence="1">Homotrimer.</text>
</comment>
<comment type="similarity">
    <text evidence="1">Belongs to the dCTP deaminase family.</text>
</comment>
<protein>
    <recommendedName>
        <fullName evidence="1">dCTP deaminase</fullName>
        <ecNumber evidence="1">3.5.4.13</ecNumber>
    </recommendedName>
    <alternativeName>
        <fullName evidence="1">Deoxycytidine triphosphate deaminase</fullName>
    </alternativeName>
</protein>
<reference key="1">
    <citation type="submission" date="2008-12" db="EMBL/GenBank/DDBJ databases">
        <title>Complete sequence of Chloroflexus aggregans DSM 9485.</title>
        <authorList>
            <consortium name="US DOE Joint Genome Institute"/>
            <person name="Lucas S."/>
            <person name="Copeland A."/>
            <person name="Lapidus A."/>
            <person name="Glavina del Rio T."/>
            <person name="Dalin E."/>
            <person name="Tice H."/>
            <person name="Pitluck S."/>
            <person name="Foster B."/>
            <person name="Larimer F."/>
            <person name="Land M."/>
            <person name="Hauser L."/>
            <person name="Kyrpides N."/>
            <person name="Mikhailova N."/>
            <person name="Bryant D.A."/>
            <person name="Richardson P."/>
        </authorList>
    </citation>
    <scope>NUCLEOTIDE SEQUENCE [LARGE SCALE GENOMIC DNA]</scope>
    <source>
        <strain>MD-66 / DSM 9485</strain>
    </source>
</reference>
<organism>
    <name type="scientific">Chloroflexus aggregans (strain MD-66 / DSM 9485)</name>
    <dbReference type="NCBI Taxonomy" id="326427"/>
    <lineage>
        <taxon>Bacteria</taxon>
        <taxon>Bacillati</taxon>
        <taxon>Chloroflexota</taxon>
        <taxon>Chloroflexia</taxon>
        <taxon>Chloroflexales</taxon>
        <taxon>Chloroflexineae</taxon>
        <taxon>Chloroflexaceae</taxon>
        <taxon>Chloroflexus</taxon>
    </lineage>
</organism>
<sequence length="186" mass="21111">MPVKSDRWIRRMALEHGMIEPFVDHQVRKGVISYGLTSYGYDMRVTNHFKVFTNVYNALVDPKKFDPRSFVDIEADYVDIPPNSFALAQSLEYFRIPRTVSCIVIGKSSYARCGIIINVTPLEPEWEGHVTIEISNTTPLPARIYAHEGIGQVLFLESDEPCEVSYADKKGKYQGQTGIVLPRIDP</sequence>
<gene>
    <name evidence="1" type="primary">dcd</name>
    <name type="ordered locus">Cagg_2446</name>
</gene>
<evidence type="ECO:0000255" key="1">
    <source>
        <dbReference type="HAMAP-Rule" id="MF_00146"/>
    </source>
</evidence>
<accession>B8G3E6</accession>
<name>DCD_CHLAD</name>
<proteinExistence type="inferred from homology"/>
<keyword id="KW-0378">Hydrolase</keyword>
<keyword id="KW-0546">Nucleotide metabolism</keyword>
<keyword id="KW-0547">Nucleotide-binding</keyword>